<keyword id="KW-0227">DNA damage</keyword>
<keyword id="KW-0234">DNA repair</keyword>
<keyword id="KW-0238">DNA-binding</keyword>
<keyword id="KW-0326">Glycosidase</keyword>
<keyword id="KW-0378">Hydrolase</keyword>
<keyword id="KW-0456">Lyase</keyword>
<keyword id="KW-0479">Metal-binding</keyword>
<keyword id="KW-0511">Multifunctional enzyme</keyword>
<keyword id="KW-0862">Zinc</keyword>
<keyword id="KW-0863">Zinc-finger</keyword>
<organism>
    <name type="scientific">Pseudoalteromonas atlantica (strain T6c / ATCC BAA-1087)</name>
    <dbReference type="NCBI Taxonomy" id="3042615"/>
    <lineage>
        <taxon>Bacteria</taxon>
        <taxon>Pseudomonadati</taxon>
        <taxon>Pseudomonadota</taxon>
        <taxon>Gammaproteobacteria</taxon>
        <taxon>Alteromonadales</taxon>
        <taxon>Alteromonadaceae</taxon>
        <taxon>Paraglaciecola</taxon>
    </lineage>
</organism>
<gene>
    <name evidence="2" type="primary">mutM</name>
    <name evidence="2" type="synonym">fpg</name>
    <name type="ordered locus">Patl_0051</name>
</gene>
<dbReference type="EC" id="3.2.2.23" evidence="2"/>
<dbReference type="EC" id="4.2.99.18" evidence="2"/>
<dbReference type="EMBL" id="CP000388">
    <property type="protein sequence ID" value="ABG38583.1"/>
    <property type="molecule type" value="Genomic_DNA"/>
</dbReference>
<dbReference type="RefSeq" id="WP_011572995.1">
    <property type="nucleotide sequence ID" value="NC_008228.1"/>
</dbReference>
<dbReference type="SMR" id="Q15ZV5"/>
<dbReference type="STRING" id="342610.Patl_0051"/>
<dbReference type="KEGG" id="pat:Patl_0051"/>
<dbReference type="eggNOG" id="COG0266">
    <property type="taxonomic scope" value="Bacteria"/>
</dbReference>
<dbReference type="HOGENOM" id="CLU_038423_1_1_6"/>
<dbReference type="OrthoDB" id="9800855at2"/>
<dbReference type="Proteomes" id="UP000001981">
    <property type="component" value="Chromosome"/>
</dbReference>
<dbReference type="GO" id="GO:0034039">
    <property type="term" value="F:8-oxo-7,8-dihydroguanine DNA N-glycosylase activity"/>
    <property type="evidence" value="ECO:0007669"/>
    <property type="project" value="TreeGrafter"/>
</dbReference>
<dbReference type="GO" id="GO:0140078">
    <property type="term" value="F:class I DNA-(apurinic or apyrimidinic site) endonuclease activity"/>
    <property type="evidence" value="ECO:0007669"/>
    <property type="project" value="UniProtKB-EC"/>
</dbReference>
<dbReference type="GO" id="GO:0003684">
    <property type="term" value="F:damaged DNA binding"/>
    <property type="evidence" value="ECO:0007669"/>
    <property type="project" value="InterPro"/>
</dbReference>
<dbReference type="GO" id="GO:0008270">
    <property type="term" value="F:zinc ion binding"/>
    <property type="evidence" value="ECO:0007669"/>
    <property type="project" value="UniProtKB-UniRule"/>
</dbReference>
<dbReference type="GO" id="GO:0006284">
    <property type="term" value="P:base-excision repair"/>
    <property type="evidence" value="ECO:0007669"/>
    <property type="project" value="InterPro"/>
</dbReference>
<dbReference type="CDD" id="cd08966">
    <property type="entry name" value="EcFpg-like_N"/>
    <property type="match status" value="1"/>
</dbReference>
<dbReference type="FunFam" id="1.10.8.50:FF:000003">
    <property type="entry name" value="Formamidopyrimidine-DNA glycosylase"/>
    <property type="match status" value="1"/>
</dbReference>
<dbReference type="FunFam" id="3.20.190.10:FF:000001">
    <property type="entry name" value="Formamidopyrimidine-DNA glycosylase"/>
    <property type="match status" value="1"/>
</dbReference>
<dbReference type="Gene3D" id="1.10.8.50">
    <property type="match status" value="1"/>
</dbReference>
<dbReference type="Gene3D" id="3.20.190.10">
    <property type="entry name" value="MutM-like, N-terminal"/>
    <property type="match status" value="1"/>
</dbReference>
<dbReference type="HAMAP" id="MF_00103">
    <property type="entry name" value="Fapy_DNA_glycosyl"/>
    <property type="match status" value="1"/>
</dbReference>
<dbReference type="InterPro" id="IPR015886">
    <property type="entry name" value="DNA_glyclase/AP_lyase_DNA-bd"/>
</dbReference>
<dbReference type="InterPro" id="IPR020629">
    <property type="entry name" value="Formamido-pyr_DNA_Glyclase"/>
</dbReference>
<dbReference type="InterPro" id="IPR012319">
    <property type="entry name" value="FPG_cat"/>
</dbReference>
<dbReference type="InterPro" id="IPR035937">
    <property type="entry name" value="MutM-like_N-ter"/>
</dbReference>
<dbReference type="InterPro" id="IPR010979">
    <property type="entry name" value="Ribosomal_uS13-like_H2TH"/>
</dbReference>
<dbReference type="InterPro" id="IPR000214">
    <property type="entry name" value="Znf_DNA_glyclase/AP_lyase"/>
</dbReference>
<dbReference type="InterPro" id="IPR010663">
    <property type="entry name" value="Znf_FPG/IleRS"/>
</dbReference>
<dbReference type="NCBIfam" id="TIGR00577">
    <property type="entry name" value="fpg"/>
    <property type="match status" value="1"/>
</dbReference>
<dbReference type="NCBIfam" id="NF002211">
    <property type="entry name" value="PRK01103.1"/>
    <property type="match status" value="1"/>
</dbReference>
<dbReference type="PANTHER" id="PTHR22993">
    <property type="entry name" value="FORMAMIDOPYRIMIDINE-DNA GLYCOSYLASE"/>
    <property type="match status" value="1"/>
</dbReference>
<dbReference type="PANTHER" id="PTHR22993:SF9">
    <property type="entry name" value="FORMAMIDOPYRIMIDINE-DNA GLYCOSYLASE"/>
    <property type="match status" value="1"/>
</dbReference>
<dbReference type="Pfam" id="PF01149">
    <property type="entry name" value="Fapy_DNA_glyco"/>
    <property type="match status" value="1"/>
</dbReference>
<dbReference type="Pfam" id="PF06831">
    <property type="entry name" value="H2TH"/>
    <property type="match status" value="1"/>
</dbReference>
<dbReference type="Pfam" id="PF06827">
    <property type="entry name" value="zf-FPG_IleRS"/>
    <property type="match status" value="1"/>
</dbReference>
<dbReference type="SMART" id="SM00898">
    <property type="entry name" value="Fapy_DNA_glyco"/>
    <property type="match status" value="1"/>
</dbReference>
<dbReference type="SMART" id="SM01232">
    <property type="entry name" value="H2TH"/>
    <property type="match status" value="1"/>
</dbReference>
<dbReference type="SUPFAM" id="SSF57716">
    <property type="entry name" value="Glucocorticoid receptor-like (DNA-binding domain)"/>
    <property type="match status" value="1"/>
</dbReference>
<dbReference type="SUPFAM" id="SSF81624">
    <property type="entry name" value="N-terminal domain of MutM-like DNA repair proteins"/>
    <property type="match status" value="1"/>
</dbReference>
<dbReference type="SUPFAM" id="SSF46946">
    <property type="entry name" value="S13-like H2TH domain"/>
    <property type="match status" value="1"/>
</dbReference>
<dbReference type="PROSITE" id="PS51068">
    <property type="entry name" value="FPG_CAT"/>
    <property type="match status" value="1"/>
</dbReference>
<dbReference type="PROSITE" id="PS51066">
    <property type="entry name" value="ZF_FPG_2"/>
    <property type="match status" value="1"/>
</dbReference>
<feature type="initiator methionine" description="Removed" evidence="1">
    <location>
        <position position="1"/>
    </location>
</feature>
<feature type="chain" id="PRO_1000008740" description="Formamidopyrimidine-DNA glycosylase">
    <location>
        <begin position="2"/>
        <end position="270"/>
    </location>
</feature>
<feature type="zinc finger region" description="FPG-type" evidence="2">
    <location>
        <begin position="236"/>
        <end position="270"/>
    </location>
</feature>
<feature type="active site" description="Schiff-base intermediate with DNA" evidence="2">
    <location>
        <position position="2"/>
    </location>
</feature>
<feature type="active site" description="Proton donor" evidence="2">
    <location>
        <position position="3"/>
    </location>
</feature>
<feature type="active site" description="Proton donor; for beta-elimination activity" evidence="2">
    <location>
        <position position="57"/>
    </location>
</feature>
<feature type="active site" description="Proton donor; for delta-elimination activity" evidence="2">
    <location>
        <position position="260"/>
    </location>
</feature>
<feature type="binding site" evidence="2">
    <location>
        <position position="90"/>
    </location>
    <ligand>
        <name>DNA</name>
        <dbReference type="ChEBI" id="CHEBI:16991"/>
    </ligand>
</feature>
<feature type="binding site" evidence="2">
    <location>
        <position position="109"/>
    </location>
    <ligand>
        <name>DNA</name>
        <dbReference type="ChEBI" id="CHEBI:16991"/>
    </ligand>
</feature>
<feature type="binding site" evidence="2">
    <location>
        <position position="151"/>
    </location>
    <ligand>
        <name>DNA</name>
        <dbReference type="ChEBI" id="CHEBI:16991"/>
    </ligand>
</feature>
<evidence type="ECO:0000250" key="1"/>
<evidence type="ECO:0000255" key="2">
    <source>
        <dbReference type="HAMAP-Rule" id="MF_00103"/>
    </source>
</evidence>
<sequence length="270" mass="30198">MPELPEVEVSRLGISPHLIGQHIEQIIVRHKQLRWWVPDDVHLAEGHKVNDVRRRAKYLFIDTDAGSIILHLGMSGKLRIVNSETPVIKHDHIDIVLTNGVCLRFNDARRFGACLWQRVGDPEIGMIAALGPEPLTSDFDGQRLYDLSRTKNVPVKNFIMDNKVVVGVGNIYANESLFIAGIDPRKAAKKVSKKSYLALGDIIKQVLAKAIEQGGTTLKDFTQADGNPGYFAQHLRVYGRKGQACEVCESEIQSVTLGQRNTFFCEQCQK</sequence>
<proteinExistence type="inferred from homology"/>
<comment type="function">
    <text evidence="2">Involved in base excision repair of DNA damaged by oxidation or by mutagenic agents. Acts as a DNA glycosylase that recognizes and removes damaged bases. Has a preference for oxidized purines, such as 7,8-dihydro-8-oxoguanine (8-oxoG). Has AP (apurinic/apyrimidinic) lyase activity and introduces nicks in the DNA strand. Cleaves the DNA backbone by beta-delta elimination to generate a single-strand break at the site of the removed base with both 3'- and 5'-phosphates.</text>
</comment>
<comment type="catalytic activity">
    <reaction evidence="2">
        <text>Hydrolysis of DNA containing ring-opened 7-methylguanine residues, releasing 2,6-diamino-4-hydroxy-5-(N-methyl)formamidopyrimidine.</text>
        <dbReference type="EC" id="3.2.2.23"/>
    </reaction>
</comment>
<comment type="catalytic activity">
    <reaction evidence="2">
        <text>2'-deoxyribonucleotide-(2'-deoxyribose 5'-phosphate)-2'-deoxyribonucleotide-DNA = a 3'-end 2'-deoxyribonucleotide-(2,3-dehydro-2,3-deoxyribose 5'-phosphate)-DNA + a 5'-end 5'-phospho-2'-deoxyribonucleoside-DNA + H(+)</text>
        <dbReference type="Rhea" id="RHEA:66592"/>
        <dbReference type="Rhea" id="RHEA-COMP:13180"/>
        <dbReference type="Rhea" id="RHEA-COMP:16897"/>
        <dbReference type="Rhea" id="RHEA-COMP:17067"/>
        <dbReference type="ChEBI" id="CHEBI:15378"/>
        <dbReference type="ChEBI" id="CHEBI:136412"/>
        <dbReference type="ChEBI" id="CHEBI:157695"/>
        <dbReference type="ChEBI" id="CHEBI:167181"/>
        <dbReference type="EC" id="4.2.99.18"/>
    </reaction>
</comment>
<comment type="cofactor">
    <cofactor evidence="2">
        <name>Zn(2+)</name>
        <dbReference type="ChEBI" id="CHEBI:29105"/>
    </cofactor>
    <text evidence="2">Binds 1 zinc ion per subunit.</text>
</comment>
<comment type="subunit">
    <text evidence="2">Monomer.</text>
</comment>
<comment type="similarity">
    <text evidence="2">Belongs to the FPG family.</text>
</comment>
<name>FPG_PSEA6</name>
<protein>
    <recommendedName>
        <fullName evidence="2">Formamidopyrimidine-DNA glycosylase</fullName>
        <shortName evidence="2">Fapy-DNA glycosylase</shortName>
        <ecNumber evidence="2">3.2.2.23</ecNumber>
    </recommendedName>
    <alternativeName>
        <fullName evidence="2">DNA-(apurinic or apyrimidinic site) lyase MutM</fullName>
        <shortName evidence="2">AP lyase MutM</shortName>
        <ecNumber evidence="2">4.2.99.18</ecNumber>
    </alternativeName>
</protein>
<reference key="1">
    <citation type="submission" date="2006-06" db="EMBL/GenBank/DDBJ databases">
        <title>Complete sequence of Pseudoalteromonas atlantica T6c.</title>
        <authorList>
            <consortium name="US DOE Joint Genome Institute"/>
            <person name="Copeland A."/>
            <person name="Lucas S."/>
            <person name="Lapidus A."/>
            <person name="Barry K."/>
            <person name="Detter J.C."/>
            <person name="Glavina del Rio T."/>
            <person name="Hammon N."/>
            <person name="Israni S."/>
            <person name="Dalin E."/>
            <person name="Tice H."/>
            <person name="Pitluck S."/>
            <person name="Saunders E."/>
            <person name="Brettin T."/>
            <person name="Bruce D."/>
            <person name="Han C."/>
            <person name="Tapia R."/>
            <person name="Gilna P."/>
            <person name="Schmutz J."/>
            <person name="Larimer F."/>
            <person name="Land M."/>
            <person name="Hauser L."/>
            <person name="Kyrpides N."/>
            <person name="Kim E."/>
            <person name="Karls A.C."/>
            <person name="Bartlett D."/>
            <person name="Higgins B.P."/>
            <person name="Richardson P."/>
        </authorList>
    </citation>
    <scope>NUCLEOTIDE SEQUENCE [LARGE SCALE GENOMIC DNA]</scope>
    <source>
        <strain>T6c / ATCC BAA-1087</strain>
    </source>
</reference>
<accession>Q15ZV5</accession>